<name>Y2070_CORGB</name>
<keyword id="KW-0903">Direct protein sequencing</keyword>
<keyword id="KW-0378">Hydrolase</keyword>
<keyword id="KW-0645">Protease</keyword>
<keyword id="KW-0964">Secreted</keyword>
<keyword id="KW-0732">Signal</keyword>
<keyword id="KW-0788">Thiol protease</keyword>
<organism>
    <name type="scientific">Corynebacterium glutamicum (strain R)</name>
    <dbReference type="NCBI Taxonomy" id="340322"/>
    <lineage>
        <taxon>Bacteria</taxon>
        <taxon>Bacillati</taxon>
        <taxon>Actinomycetota</taxon>
        <taxon>Actinomycetes</taxon>
        <taxon>Mycobacteriales</taxon>
        <taxon>Corynebacteriaceae</taxon>
        <taxon>Corynebacterium</taxon>
    </lineage>
</organism>
<gene>
    <name type="ordered locus">cgR_2070</name>
</gene>
<dbReference type="EC" id="3.4.-.-"/>
<dbReference type="EMBL" id="AP009044">
    <property type="protein sequence ID" value="BAF55069.1"/>
    <property type="molecule type" value="Genomic_DNA"/>
</dbReference>
<dbReference type="RefSeq" id="WP_003856600.1">
    <property type="nucleotide sequence ID" value="NC_009342.1"/>
</dbReference>
<dbReference type="SMR" id="A4QFQ3"/>
<dbReference type="KEGG" id="cgt:cgR_2070"/>
<dbReference type="HOGENOM" id="CLU_016043_6_0_11"/>
<dbReference type="PhylomeDB" id="A4QFQ3"/>
<dbReference type="Proteomes" id="UP000006698">
    <property type="component" value="Chromosome"/>
</dbReference>
<dbReference type="GO" id="GO:0005576">
    <property type="term" value="C:extracellular region"/>
    <property type="evidence" value="ECO:0000314"/>
    <property type="project" value="UniProtKB"/>
</dbReference>
<dbReference type="GO" id="GO:0008234">
    <property type="term" value="F:cysteine-type peptidase activity"/>
    <property type="evidence" value="ECO:0007669"/>
    <property type="project" value="UniProtKB-KW"/>
</dbReference>
<dbReference type="GO" id="GO:0006508">
    <property type="term" value="P:proteolysis"/>
    <property type="evidence" value="ECO:0007669"/>
    <property type="project" value="UniProtKB-KW"/>
</dbReference>
<dbReference type="FunFam" id="3.90.1720.10:FF:000027">
    <property type="entry name" value="Probable endopeptidase Cgl2188"/>
    <property type="match status" value="1"/>
</dbReference>
<dbReference type="Gene3D" id="3.90.1720.10">
    <property type="entry name" value="endopeptidase domain like (from Nostoc punctiforme)"/>
    <property type="match status" value="1"/>
</dbReference>
<dbReference type="InterPro" id="IPR000064">
    <property type="entry name" value="NLP_P60_dom"/>
</dbReference>
<dbReference type="InterPro" id="IPR038765">
    <property type="entry name" value="Papain-like_cys_pep_sf"/>
</dbReference>
<dbReference type="InterPro" id="IPR051794">
    <property type="entry name" value="PG_Endopeptidase_C40"/>
</dbReference>
<dbReference type="PANTHER" id="PTHR47359:SF3">
    <property type="entry name" value="NLP_P60 DOMAIN-CONTAINING PROTEIN-RELATED"/>
    <property type="match status" value="1"/>
</dbReference>
<dbReference type="PANTHER" id="PTHR47359">
    <property type="entry name" value="PEPTIDOGLYCAN DL-ENDOPEPTIDASE CWLO"/>
    <property type="match status" value="1"/>
</dbReference>
<dbReference type="Pfam" id="PF00877">
    <property type="entry name" value="NLPC_P60"/>
    <property type="match status" value="1"/>
</dbReference>
<dbReference type="SUPFAM" id="SSF54001">
    <property type="entry name" value="Cysteine proteinases"/>
    <property type="match status" value="1"/>
</dbReference>
<dbReference type="PROSITE" id="PS51935">
    <property type="entry name" value="NLPC_P60"/>
    <property type="match status" value="1"/>
</dbReference>
<proteinExistence type="evidence at protein level"/>
<evidence type="ECO:0000255" key="1">
    <source>
        <dbReference type="PROSITE-ProRule" id="PRU01284"/>
    </source>
</evidence>
<evidence type="ECO:0000269" key="2">
    <source>
    </source>
</evidence>
<evidence type="ECO:0000305" key="3"/>
<evidence type="ECO:0000312" key="4">
    <source>
        <dbReference type="EMBL" id="BAF55069.1"/>
    </source>
</evidence>
<reference evidence="4" key="1">
    <citation type="journal article" date="2007" name="Microbiology">
        <title>Comparative analysis of the Corynebacterium glutamicum group and complete genome sequence of strain R.</title>
        <authorList>
            <person name="Yukawa H."/>
            <person name="Omumasaba C.A."/>
            <person name="Nonaka H."/>
            <person name="Kos P."/>
            <person name="Okai N."/>
            <person name="Suzuki N."/>
            <person name="Suda M."/>
            <person name="Tsuge Y."/>
            <person name="Watanabe J."/>
            <person name="Ikeda Y."/>
            <person name="Vertes A.A."/>
            <person name="Inui M."/>
        </authorList>
    </citation>
    <scope>NUCLEOTIDE SEQUENCE [LARGE SCALE GENOMIC DNA]</scope>
    <source>
        <strain>R</strain>
    </source>
</reference>
<reference evidence="3" key="2">
    <citation type="journal article" date="2009" name="Appl. Microbiol. Biotechnol.">
        <title>Identification of new secreted proteins and secretion of heterologous amylase by C. glutamicum.</title>
        <authorList>
            <person name="Suzuki N."/>
            <person name="Watanabe K."/>
            <person name="Okibe N."/>
            <person name="Tsuchida Y."/>
            <person name="Inui M."/>
            <person name="Yukawa H."/>
        </authorList>
    </citation>
    <scope>PROTEIN SEQUENCE OF 36-54</scope>
    <scope>SUBCELLULAR LOCATION</scope>
</reference>
<protein>
    <recommendedName>
        <fullName>Probable endopeptidase cgR_2070</fullName>
        <ecNumber>3.4.-.-</ecNumber>
    </recommendedName>
</protein>
<feature type="signal peptide" evidence="2">
    <location>
        <begin position="1"/>
        <end position="35"/>
    </location>
</feature>
<feature type="chain" id="PRO_0000392963" description="Probable endopeptidase cgR_2070">
    <location>
        <begin position="36"/>
        <end position="211"/>
    </location>
</feature>
<feature type="domain" description="NlpC/P60" evidence="1">
    <location>
        <begin position="97"/>
        <end position="211"/>
    </location>
</feature>
<feature type="active site" description="Nucleophile" evidence="1">
    <location>
        <position position="127"/>
    </location>
</feature>
<feature type="active site" description="Proton acceptor" evidence="1">
    <location>
        <position position="175"/>
    </location>
</feature>
<feature type="active site" evidence="1">
    <location>
        <position position="187"/>
    </location>
</feature>
<sequence length="211" mass="21245">MGKHRRNNSNATRKAVAASAVALGATAAIASPAQAAEVVVPGTGISVDIAGIETTPGLNNVPGIDQWIPSLSSQAAPTAYAAVIDAPAAEAQAAPAASTGQAIVDAARTKIGSPYGWGATGPNAFDCSGLTSWAYSQVGKSIPRTSQAQAAQGTPVAYSDLQAGDIVAFYSGATHVGIYSGHGTVIHALNSSTPLSEHSLDYMPFHSAVRF</sequence>
<accession>A4QFQ3</accession>
<comment type="subcellular location">
    <subcellularLocation>
        <location evidence="2">Secreted</location>
    </subcellularLocation>
</comment>
<comment type="similarity">
    <text evidence="1 3">Belongs to the peptidase C40 family.</text>
</comment>